<comment type="function">
    <text evidence="1">Required for the assembly of the mitochondrial respiratory chain complex IV (CIV), also known as cytochrome c oxidase. May participate in merging the COX1 and COX2 assembly lines.</text>
</comment>
<comment type="subcellular location">
    <subcellularLocation>
        <location evidence="1">Mitochondrion inner membrane</location>
        <topology evidence="1">Single-pass membrane protein</topology>
    </subcellularLocation>
</comment>
<comment type="similarity">
    <text evidence="3">Belongs to the COX16 family.</text>
</comment>
<protein>
    <recommendedName>
        <fullName>Cytochrome c oxidase assembly protein COX16, mitochondrial</fullName>
    </recommendedName>
</protein>
<reference key="1">
    <citation type="journal article" date="2004" name="Science">
        <title>The Ashbya gossypii genome as a tool for mapping the ancient Saccharomyces cerevisiae genome.</title>
        <authorList>
            <person name="Dietrich F.S."/>
            <person name="Voegeli S."/>
            <person name="Brachat S."/>
            <person name="Lerch A."/>
            <person name="Gates K."/>
            <person name="Steiner S."/>
            <person name="Mohr C."/>
            <person name="Poehlmann R."/>
            <person name="Luedi P."/>
            <person name="Choi S."/>
            <person name="Wing R.A."/>
            <person name="Flavier A."/>
            <person name="Gaffney T.D."/>
            <person name="Philippsen P."/>
        </authorList>
    </citation>
    <scope>NUCLEOTIDE SEQUENCE [LARGE SCALE GENOMIC DNA]</scope>
    <source>
        <strain>ATCC 10895 / CBS 109.51 / FGSC 9923 / NRRL Y-1056</strain>
    </source>
</reference>
<reference key="2">
    <citation type="journal article" date="2013" name="G3 (Bethesda)">
        <title>Genomes of Ashbya fungi isolated from insects reveal four mating-type loci, numerous translocations, lack of transposons, and distinct gene duplications.</title>
        <authorList>
            <person name="Dietrich F.S."/>
            <person name="Voegeli S."/>
            <person name="Kuo S."/>
            <person name="Philippsen P."/>
        </authorList>
    </citation>
    <scope>GENOME REANNOTATION</scope>
    <source>
        <strain>ATCC 10895 / CBS 109.51 / FGSC 9923 / NRRL Y-1056</strain>
    </source>
</reference>
<proteinExistence type="inferred from homology"/>
<evidence type="ECO:0000250" key="1">
    <source>
        <dbReference type="UniProtKB" id="P47081"/>
    </source>
</evidence>
<evidence type="ECO:0000255" key="2"/>
<evidence type="ECO:0000305" key="3"/>
<feature type="transit peptide" description="Mitochondrion" evidence="2">
    <location>
        <begin position="1"/>
        <end position="31"/>
    </location>
</feature>
<feature type="chain" id="PRO_0000280639" description="Cytochrome c oxidase assembly protein COX16, mitochondrial">
    <location>
        <begin position="32"/>
        <end position="121"/>
    </location>
</feature>
<feature type="transmembrane region" description="Helical" evidence="2">
    <location>
        <begin position="34"/>
        <end position="56"/>
    </location>
</feature>
<sequence>MSLGSRTFRSKRQMAAFEKSLQGRYLKLLRRNPFLFYGVPFCTLMAVGSYCLSDFTAVKYEREDKKVRSVQEDELVKLRANRRTVDLKEEFYRLQGLADQDWEPVRVPRLPGESENVWDVE</sequence>
<dbReference type="EMBL" id="AE016814">
    <property type="protein sequence ID" value="AAS50198.1"/>
    <property type="molecule type" value="Genomic_DNA"/>
</dbReference>
<dbReference type="RefSeq" id="NP_982374.1">
    <property type="nucleotide sequence ID" value="NM_207727.1"/>
</dbReference>
<dbReference type="FunCoup" id="Q75FA7">
    <property type="interactions" value="152"/>
</dbReference>
<dbReference type="STRING" id="284811.Q75FA7"/>
<dbReference type="EnsemblFungi" id="AAS50198">
    <property type="protein sequence ID" value="AAS50198"/>
    <property type="gene ID" value="AGOS_AAL168C"/>
</dbReference>
<dbReference type="GeneID" id="4618435"/>
<dbReference type="KEGG" id="ago:AGOS_AAL168C"/>
<dbReference type="eggNOG" id="ENOG502S9GT">
    <property type="taxonomic scope" value="Eukaryota"/>
</dbReference>
<dbReference type="HOGENOM" id="CLU_131611_2_0_1"/>
<dbReference type="InParanoid" id="Q75FA7"/>
<dbReference type="OMA" id="VNMKDEY"/>
<dbReference type="OrthoDB" id="5516033at2759"/>
<dbReference type="Proteomes" id="UP000000591">
    <property type="component" value="Chromosome I"/>
</dbReference>
<dbReference type="GO" id="GO:0005743">
    <property type="term" value="C:mitochondrial inner membrane"/>
    <property type="evidence" value="ECO:0000318"/>
    <property type="project" value="GO_Central"/>
</dbReference>
<dbReference type="GO" id="GO:0033617">
    <property type="term" value="P:mitochondrial cytochrome c oxidase assembly"/>
    <property type="evidence" value="ECO:0000318"/>
    <property type="project" value="GO_Central"/>
</dbReference>
<dbReference type="InterPro" id="IPR020164">
    <property type="entry name" value="Cyt_c_Oxase_assmbl_COX16"/>
</dbReference>
<dbReference type="PANTHER" id="PTHR17130:SF14">
    <property type="entry name" value="CYTOCHROME C OXIDASE ASSEMBLY PROTEIN COX16 HOMOLOG, MITOCHONDRIAL"/>
    <property type="match status" value="1"/>
</dbReference>
<dbReference type="PANTHER" id="PTHR17130">
    <property type="entry name" value="MITOCHONDRIAL OUTER MEMBRANE PROTEIN 25"/>
    <property type="match status" value="1"/>
</dbReference>
<dbReference type="Pfam" id="PF14138">
    <property type="entry name" value="COX16"/>
    <property type="match status" value="1"/>
</dbReference>
<gene>
    <name type="primary">COX16</name>
    <name type="ordered locus">AAL168C</name>
</gene>
<keyword id="KW-0472">Membrane</keyword>
<keyword id="KW-0496">Mitochondrion</keyword>
<keyword id="KW-0999">Mitochondrion inner membrane</keyword>
<keyword id="KW-1185">Reference proteome</keyword>
<keyword id="KW-0809">Transit peptide</keyword>
<keyword id="KW-0812">Transmembrane</keyword>
<keyword id="KW-1133">Transmembrane helix</keyword>
<name>COX16_EREGS</name>
<accession>Q75FA7</accession>
<organism>
    <name type="scientific">Eremothecium gossypii (strain ATCC 10895 / CBS 109.51 / FGSC 9923 / NRRL Y-1056)</name>
    <name type="common">Yeast</name>
    <name type="synonym">Ashbya gossypii</name>
    <dbReference type="NCBI Taxonomy" id="284811"/>
    <lineage>
        <taxon>Eukaryota</taxon>
        <taxon>Fungi</taxon>
        <taxon>Dikarya</taxon>
        <taxon>Ascomycota</taxon>
        <taxon>Saccharomycotina</taxon>
        <taxon>Saccharomycetes</taxon>
        <taxon>Saccharomycetales</taxon>
        <taxon>Saccharomycetaceae</taxon>
        <taxon>Eremothecium</taxon>
    </lineage>
</organism>